<accession>B0DSK4</accession>
<reference key="1">
    <citation type="journal article" date="2008" name="Nature">
        <title>The genome of Laccaria bicolor provides insights into mycorrhizal symbiosis.</title>
        <authorList>
            <person name="Martin F."/>
            <person name="Aerts A."/>
            <person name="Ahren D."/>
            <person name="Brun A."/>
            <person name="Danchin E.G.J."/>
            <person name="Duchaussoy F."/>
            <person name="Gibon J."/>
            <person name="Kohler A."/>
            <person name="Lindquist E."/>
            <person name="Pereda V."/>
            <person name="Salamov A."/>
            <person name="Shapiro H.J."/>
            <person name="Wuyts J."/>
            <person name="Blaudez D."/>
            <person name="Buee M."/>
            <person name="Brokstein P."/>
            <person name="Canbaeck B."/>
            <person name="Cohen D."/>
            <person name="Courty P.E."/>
            <person name="Coutinho P.M."/>
            <person name="Delaruelle C."/>
            <person name="Detter J.C."/>
            <person name="Deveau A."/>
            <person name="DiFazio S."/>
            <person name="Duplessis S."/>
            <person name="Fraissinet-Tachet L."/>
            <person name="Lucic E."/>
            <person name="Frey-Klett P."/>
            <person name="Fourrey C."/>
            <person name="Feussner I."/>
            <person name="Gay G."/>
            <person name="Grimwood J."/>
            <person name="Hoegger P.J."/>
            <person name="Jain P."/>
            <person name="Kilaru S."/>
            <person name="Labbe J."/>
            <person name="Lin Y.C."/>
            <person name="Legue V."/>
            <person name="Le Tacon F."/>
            <person name="Marmeisse R."/>
            <person name="Melayah D."/>
            <person name="Montanini B."/>
            <person name="Muratet M."/>
            <person name="Nehls U."/>
            <person name="Niculita-Hirzel H."/>
            <person name="Oudot-Le Secq M.P."/>
            <person name="Peter M."/>
            <person name="Quesneville H."/>
            <person name="Rajashekar B."/>
            <person name="Reich M."/>
            <person name="Rouhier N."/>
            <person name="Schmutz J."/>
            <person name="Yin T."/>
            <person name="Chalot M."/>
            <person name="Henrissat B."/>
            <person name="Kuees U."/>
            <person name="Lucas S."/>
            <person name="Van de Peer Y."/>
            <person name="Podila G.K."/>
            <person name="Polle A."/>
            <person name="Pukkila P.J."/>
            <person name="Richardson P.M."/>
            <person name="Rouze P."/>
            <person name="Sanders I.R."/>
            <person name="Stajich J.E."/>
            <person name="Tunlid A."/>
            <person name="Tuskan G."/>
            <person name="Grigoriev I.V."/>
        </authorList>
    </citation>
    <scope>NUCLEOTIDE SEQUENCE [LARGE SCALE GENOMIC DNA]</scope>
    <source>
        <strain>S238N-H82 / ATCC MYA-4686</strain>
    </source>
</reference>
<dbReference type="EMBL" id="DS547130">
    <property type="protein sequence ID" value="EDR02488.1"/>
    <property type="molecule type" value="Genomic_DNA"/>
</dbReference>
<dbReference type="RefSeq" id="XP_001886851.1">
    <property type="nucleotide sequence ID" value="XM_001886816.1"/>
</dbReference>
<dbReference type="SMR" id="B0DSK4"/>
<dbReference type="FunCoup" id="B0DSK4">
    <property type="interactions" value="335"/>
</dbReference>
<dbReference type="STRING" id="486041.B0DSK4"/>
<dbReference type="GeneID" id="6082428"/>
<dbReference type="KEGG" id="lbc:LACBIDRAFT_295443"/>
<dbReference type="HOGENOM" id="CLU_002794_4_1_1"/>
<dbReference type="InParanoid" id="B0DSK4"/>
<dbReference type="OrthoDB" id="198619at2759"/>
<dbReference type="UniPathway" id="UPA00345"/>
<dbReference type="Proteomes" id="UP000001194">
    <property type="component" value="Unassembled WGS sequence"/>
</dbReference>
<dbReference type="GO" id="GO:0005739">
    <property type="term" value="C:mitochondrion"/>
    <property type="evidence" value="ECO:0007669"/>
    <property type="project" value="UniProtKB-SubCell"/>
</dbReference>
<dbReference type="GO" id="GO:0005525">
    <property type="term" value="F:GTP binding"/>
    <property type="evidence" value="ECO:0007669"/>
    <property type="project" value="UniProtKB-UniRule"/>
</dbReference>
<dbReference type="GO" id="GO:0003924">
    <property type="term" value="F:GTPase activity"/>
    <property type="evidence" value="ECO:0007669"/>
    <property type="project" value="UniProtKB-UniRule"/>
</dbReference>
<dbReference type="GO" id="GO:0003746">
    <property type="term" value="F:translation elongation factor activity"/>
    <property type="evidence" value="ECO:0007669"/>
    <property type="project" value="UniProtKB-UniRule"/>
</dbReference>
<dbReference type="GO" id="GO:0070125">
    <property type="term" value="P:mitochondrial translational elongation"/>
    <property type="evidence" value="ECO:0007669"/>
    <property type="project" value="UniProtKB-UniRule"/>
</dbReference>
<dbReference type="CDD" id="cd01886">
    <property type="entry name" value="EF-G"/>
    <property type="match status" value="1"/>
</dbReference>
<dbReference type="CDD" id="cd16262">
    <property type="entry name" value="EFG_III"/>
    <property type="match status" value="1"/>
</dbReference>
<dbReference type="CDD" id="cd01434">
    <property type="entry name" value="EFG_mtEFG1_IV"/>
    <property type="match status" value="1"/>
</dbReference>
<dbReference type="CDD" id="cd04091">
    <property type="entry name" value="mtEFG1_II_like"/>
    <property type="match status" value="1"/>
</dbReference>
<dbReference type="FunFam" id="3.30.230.10:FF:000003">
    <property type="entry name" value="Elongation factor G"/>
    <property type="match status" value="1"/>
</dbReference>
<dbReference type="FunFam" id="3.30.70.240:FF:000001">
    <property type="entry name" value="Elongation factor G"/>
    <property type="match status" value="1"/>
</dbReference>
<dbReference type="FunFam" id="3.30.70.870:FF:000001">
    <property type="entry name" value="Elongation factor G"/>
    <property type="match status" value="1"/>
</dbReference>
<dbReference type="FunFam" id="3.40.50.300:FF:000029">
    <property type="entry name" value="Elongation factor G"/>
    <property type="match status" value="1"/>
</dbReference>
<dbReference type="FunFam" id="2.40.30.10:FF:000022">
    <property type="entry name" value="Elongation factor G, mitochondrial"/>
    <property type="match status" value="1"/>
</dbReference>
<dbReference type="Gene3D" id="3.30.230.10">
    <property type="match status" value="1"/>
</dbReference>
<dbReference type="Gene3D" id="3.30.70.240">
    <property type="match status" value="1"/>
</dbReference>
<dbReference type="Gene3D" id="3.30.70.870">
    <property type="entry name" value="Elongation Factor G (Translational Gtpase), domain 3"/>
    <property type="match status" value="1"/>
</dbReference>
<dbReference type="Gene3D" id="3.40.50.300">
    <property type="entry name" value="P-loop containing nucleotide triphosphate hydrolases"/>
    <property type="match status" value="1"/>
</dbReference>
<dbReference type="Gene3D" id="2.40.30.10">
    <property type="entry name" value="Translation factors"/>
    <property type="match status" value="1"/>
</dbReference>
<dbReference type="HAMAP" id="MF_00054_B">
    <property type="entry name" value="EF_G_EF_2_B"/>
    <property type="match status" value="1"/>
</dbReference>
<dbReference type="InterPro" id="IPR041095">
    <property type="entry name" value="EFG_II"/>
</dbReference>
<dbReference type="InterPro" id="IPR009022">
    <property type="entry name" value="EFG_III"/>
</dbReference>
<dbReference type="InterPro" id="IPR035647">
    <property type="entry name" value="EFG_III/V"/>
</dbReference>
<dbReference type="InterPro" id="IPR047872">
    <property type="entry name" value="EFG_IV"/>
</dbReference>
<dbReference type="InterPro" id="IPR000640">
    <property type="entry name" value="EFG_V-like"/>
</dbReference>
<dbReference type="InterPro" id="IPR004161">
    <property type="entry name" value="EFTu-like_2"/>
</dbReference>
<dbReference type="InterPro" id="IPR031157">
    <property type="entry name" value="G_TR_CS"/>
</dbReference>
<dbReference type="InterPro" id="IPR027417">
    <property type="entry name" value="P-loop_NTPase"/>
</dbReference>
<dbReference type="InterPro" id="IPR020568">
    <property type="entry name" value="Ribosomal_Su5_D2-typ_SF"/>
</dbReference>
<dbReference type="InterPro" id="IPR014721">
    <property type="entry name" value="Ribsml_uS5_D2-typ_fold_subgr"/>
</dbReference>
<dbReference type="InterPro" id="IPR005225">
    <property type="entry name" value="Small_GTP-bd"/>
</dbReference>
<dbReference type="InterPro" id="IPR000795">
    <property type="entry name" value="T_Tr_GTP-bd_dom"/>
</dbReference>
<dbReference type="InterPro" id="IPR009000">
    <property type="entry name" value="Transl_B-barrel_sf"/>
</dbReference>
<dbReference type="InterPro" id="IPR004540">
    <property type="entry name" value="Transl_elong_EFG/EF2"/>
</dbReference>
<dbReference type="InterPro" id="IPR005517">
    <property type="entry name" value="Transl_elong_EFG/EF2_IV"/>
</dbReference>
<dbReference type="NCBIfam" id="TIGR00484">
    <property type="entry name" value="EF-G"/>
    <property type="match status" value="1"/>
</dbReference>
<dbReference type="NCBIfam" id="NF009381">
    <property type="entry name" value="PRK12740.1-5"/>
    <property type="match status" value="1"/>
</dbReference>
<dbReference type="NCBIfam" id="TIGR00231">
    <property type="entry name" value="small_GTP"/>
    <property type="match status" value="1"/>
</dbReference>
<dbReference type="PANTHER" id="PTHR43636">
    <property type="entry name" value="ELONGATION FACTOR G, MITOCHONDRIAL"/>
    <property type="match status" value="1"/>
</dbReference>
<dbReference type="PANTHER" id="PTHR43636:SF2">
    <property type="entry name" value="ELONGATION FACTOR G, MITOCHONDRIAL"/>
    <property type="match status" value="1"/>
</dbReference>
<dbReference type="Pfam" id="PF00679">
    <property type="entry name" value="EFG_C"/>
    <property type="match status" value="1"/>
</dbReference>
<dbReference type="Pfam" id="PF14492">
    <property type="entry name" value="EFG_III"/>
    <property type="match status" value="1"/>
</dbReference>
<dbReference type="Pfam" id="PF03764">
    <property type="entry name" value="EFG_IV"/>
    <property type="match status" value="1"/>
</dbReference>
<dbReference type="Pfam" id="PF00009">
    <property type="entry name" value="GTP_EFTU"/>
    <property type="match status" value="1"/>
</dbReference>
<dbReference type="Pfam" id="PF03144">
    <property type="entry name" value="GTP_EFTU_D2"/>
    <property type="match status" value="1"/>
</dbReference>
<dbReference type="PRINTS" id="PR00315">
    <property type="entry name" value="ELONGATNFCT"/>
</dbReference>
<dbReference type="SMART" id="SM00838">
    <property type="entry name" value="EFG_C"/>
    <property type="match status" value="1"/>
</dbReference>
<dbReference type="SMART" id="SM00889">
    <property type="entry name" value="EFG_IV"/>
    <property type="match status" value="1"/>
</dbReference>
<dbReference type="SUPFAM" id="SSF54980">
    <property type="entry name" value="EF-G C-terminal domain-like"/>
    <property type="match status" value="2"/>
</dbReference>
<dbReference type="SUPFAM" id="SSF52540">
    <property type="entry name" value="P-loop containing nucleoside triphosphate hydrolases"/>
    <property type="match status" value="1"/>
</dbReference>
<dbReference type="SUPFAM" id="SSF54211">
    <property type="entry name" value="Ribosomal protein S5 domain 2-like"/>
    <property type="match status" value="1"/>
</dbReference>
<dbReference type="SUPFAM" id="SSF50447">
    <property type="entry name" value="Translation proteins"/>
    <property type="match status" value="1"/>
</dbReference>
<dbReference type="PROSITE" id="PS00301">
    <property type="entry name" value="G_TR_1"/>
    <property type="match status" value="1"/>
</dbReference>
<dbReference type="PROSITE" id="PS51722">
    <property type="entry name" value="G_TR_2"/>
    <property type="match status" value="1"/>
</dbReference>
<proteinExistence type="inferred from homology"/>
<gene>
    <name evidence="1" type="primary">MEF1</name>
    <name type="ORF">LACBIDRAFT_295443</name>
</gene>
<comment type="function">
    <text evidence="1">Mitochondrial GTPase that catalyzes the GTP-dependent ribosomal translocation step during translation elongation. During this step, the ribosome changes from the pre-translocational (PRE) to the post-translocational (POST) state as the newly formed A-site-bound peptidyl-tRNA and P-site-bound deacylated tRNA move to the P and E sites, respectively. Catalyzes the coordinated movement of the two tRNA molecules, the mRNA and conformational changes in the ribosome.</text>
</comment>
<comment type="pathway">
    <text evidence="1">Protein biosynthesis; polypeptide chain elongation.</text>
</comment>
<comment type="subcellular location">
    <subcellularLocation>
        <location evidence="1">Mitochondrion</location>
    </subcellularLocation>
</comment>
<comment type="miscellaneous">
    <text evidence="1">This protein may be expected to contain an N-terminal transit peptide but none has been predicted.</text>
</comment>
<comment type="similarity">
    <text evidence="3">Belongs to the TRAFAC class translation factor GTPase superfamily. Classic translation factor GTPase family. EF-G/EF-2 subfamily.</text>
</comment>
<sequence>MCIGPAPTPETEEELPPSPQHVLTEKDHQRLRFQRNIGVSAHIDSGKTTLTERILYYTGRISQIHEVRGRDAVGAKMDSMDLEREKGITIQSAATFCDWETTDVATGNKQNYAINIIDTPGHVDFTIEVERALRVLDGAILVLCAVAGVQSQTTTVDRQMRRYGVPRISFINKMDRPGANPWRIVNQIRSKLRIPAAAVQVPIGIEDEFKGVVDLVHWRSIYNEGQKGNEVVISQEIPESVMELAKAKRNELVEQLAEVDEEIGELFLNDELPNNDQIAAAIRRSTIALKFSPVFLGSAIKNTAVQPMLDGVCAYLPNPAESEVLAHDTSLPSSAPQVQLTPAADAPLVGLAFKLEEGRFGQLTYMRVYQGTLKKGNQIYNARTGKKVKVPRLVRMHSNEMEDIESIGPGEICAIFGVECSSGDTFTDGSTSFSMTNMYVPEPVISLSIKPKGIETPNFSRALNRFQKEDPTFKVHIDHESKETIISGMGELHLEIYVERMRREYNTDCVTGKPRVAFRETITQRADFAYTHKKQTGGAGQYAKVVGYIEPMEPDPETGKDVAFESVVMGGNIPTNFIPAIEKGFYEALEKGALSGNAIFGCRFVLKDGAFHAVDSSELAFRLATIGAFREAFKMAKGVILEPIMNVEVVAPVEFQSQVIGGLNTRRGTIVDSEVRDDEFTAAAEVALNDMFGYSNQLRGSTQGKGEFSMEYKHHMPVLPNLQKDLEEAYRRTLVVKK</sequence>
<evidence type="ECO:0000255" key="1">
    <source>
        <dbReference type="HAMAP-Rule" id="MF_03061"/>
    </source>
</evidence>
<evidence type="ECO:0000256" key="2">
    <source>
        <dbReference type="SAM" id="MobiDB-lite"/>
    </source>
</evidence>
<evidence type="ECO:0000305" key="3"/>
<protein>
    <recommendedName>
        <fullName evidence="1">Elongation factor G, mitochondrial</fullName>
        <shortName evidence="1">EF-Gmt</shortName>
    </recommendedName>
    <alternativeName>
        <fullName evidence="1">Elongation factor G 1, mitochondrial</fullName>
        <shortName evidence="1">mEF-G 1</shortName>
    </alternativeName>
    <alternativeName>
        <fullName evidence="1">Elongation factor G1</fullName>
    </alternativeName>
</protein>
<name>EFGM_LACBS</name>
<feature type="chain" id="PRO_0000385574" description="Elongation factor G, mitochondrial">
    <location>
        <begin position="1"/>
        <end position="738"/>
    </location>
</feature>
<feature type="domain" description="tr-type G">
    <location>
        <begin position="32"/>
        <end position="320"/>
    </location>
</feature>
<feature type="region of interest" description="Disordered" evidence="2">
    <location>
        <begin position="1"/>
        <end position="20"/>
    </location>
</feature>
<feature type="binding site" evidence="1">
    <location>
        <begin position="41"/>
        <end position="48"/>
    </location>
    <ligand>
        <name>GTP</name>
        <dbReference type="ChEBI" id="CHEBI:37565"/>
    </ligand>
</feature>
<feature type="binding site" evidence="1">
    <location>
        <begin position="118"/>
        <end position="122"/>
    </location>
    <ligand>
        <name>GTP</name>
        <dbReference type="ChEBI" id="CHEBI:37565"/>
    </ligand>
</feature>
<feature type="binding site" evidence="1">
    <location>
        <begin position="172"/>
        <end position="175"/>
    </location>
    <ligand>
        <name>GTP</name>
        <dbReference type="ChEBI" id="CHEBI:37565"/>
    </ligand>
</feature>
<organism>
    <name type="scientific">Laccaria bicolor (strain S238N-H82 / ATCC MYA-4686)</name>
    <name type="common">Bicoloured deceiver</name>
    <name type="synonym">Laccaria laccata var. bicolor</name>
    <dbReference type="NCBI Taxonomy" id="486041"/>
    <lineage>
        <taxon>Eukaryota</taxon>
        <taxon>Fungi</taxon>
        <taxon>Dikarya</taxon>
        <taxon>Basidiomycota</taxon>
        <taxon>Agaricomycotina</taxon>
        <taxon>Agaricomycetes</taxon>
        <taxon>Agaricomycetidae</taxon>
        <taxon>Agaricales</taxon>
        <taxon>Agaricineae</taxon>
        <taxon>Hydnangiaceae</taxon>
        <taxon>Laccaria</taxon>
    </lineage>
</organism>
<keyword id="KW-0251">Elongation factor</keyword>
<keyword id="KW-0342">GTP-binding</keyword>
<keyword id="KW-0496">Mitochondrion</keyword>
<keyword id="KW-0547">Nucleotide-binding</keyword>
<keyword id="KW-0648">Protein biosynthesis</keyword>
<keyword id="KW-1185">Reference proteome</keyword>